<feature type="chain" id="PRO_0000166602" description="Phosphoenolpyruvate carboxylase">
    <location>
        <begin position="1"/>
        <end position="900"/>
    </location>
</feature>
<feature type="active site" evidence="1">
    <location>
        <position position="140"/>
    </location>
</feature>
<feature type="active site" evidence="1">
    <location>
        <position position="568"/>
    </location>
</feature>
<gene>
    <name evidence="1" type="primary">ppc</name>
    <name type="ordered locus">NGO_2020</name>
</gene>
<name>CAPP_NEIG1</name>
<comment type="function">
    <text evidence="1">Forms oxaloacetate, a four-carbon dicarboxylic acid source for the tricarboxylic acid cycle.</text>
</comment>
<comment type="catalytic activity">
    <reaction evidence="1">
        <text>oxaloacetate + phosphate = phosphoenolpyruvate + hydrogencarbonate</text>
        <dbReference type="Rhea" id="RHEA:28370"/>
        <dbReference type="ChEBI" id="CHEBI:16452"/>
        <dbReference type="ChEBI" id="CHEBI:17544"/>
        <dbReference type="ChEBI" id="CHEBI:43474"/>
        <dbReference type="ChEBI" id="CHEBI:58702"/>
        <dbReference type="EC" id="4.1.1.31"/>
    </reaction>
</comment>
<comment type="cofactor">
    <cofactor evidence="1">
        <name>Mg(2+)</name>
        <dbReference type="ChEBI" id="CHEBI:18420"/>
    </cofactor>
</comment>
<comment type="similarity">
    <text evidence="1">Belongs to the PEPCase type 1 family.</text>
</comment>
<sequence length="900" mass="101122">MQLHILNNPKDAALAADAEFLKQSLFNLLHEEASPLVVETVKLLSTSDDSAALIEKVLPQLDERQTYDLTLACGLFAQILNIAEDVHHERRRQIHEDAGHNAAEGSLTETVRRLKAGKADGKSVQRQLDNTSVTAVLTAHPTEVQRQTVLNFNRRIRALLPQRERCTNADALARLRREIDTVLLGLWQTSETRRHKLSVNDEINNGVSIFPMSFFEALPKLYRKMEHDFQTAYPDVRVPNILKIGGWIGGDRDGNPFVSGETLRFAFRRHADAVFRFYRSELDKLYRELPLSIRRVKVNDDVMALAALSPDEEIARTEEPYRRAIAYIMARAMGKARSLGLGMGCKFGFLEPYASAQKFLDDLKKLQRSLIDNGSRLLAEGRLADLIRSVSVFGFHMMPLDLRQHAGKHADVVAELFQHAGLEDYNSLNEEQKQAALLRELGHQRPLYSPFITYSDHTRRELAIFNEARKIKDEFGEDAVTQSIISNCEQPGDLLALALLLKESGLLAVENGKPHSRINIVPLFETIEALENACPVMETMFRLDWYDALLESRGNIQEIMLGYSDSNKDGGYVTSSWCLHQAELGLVELFKKYDVRMRLFHGRGGSVGRGGGPSYQAILAQPAGSVAGQIRITEQGEVITAKYADPGNAQRNLETLVAATLEASILPDKKDPDAKLMQALSDVSFKYYRELITHPDFIDYFLQTSPIQEIATLNLGSRPASRKTLARIQDLRAIPWVFSWMQNRLMLPAWYGFGSAVETLCEGSPETLAALRGHAQNNPFFQAMLSNMEQVMAKTDITLAENYAGLSESPEKAKVIFGMIKEEYRRSRKALLDLLQTEELLRDNRSLARSLALRIPYLNALNGLQVAMLKRLRKEPDNPHALLMVHLTINGVAQGLRNTG</sequence>
<evidence type="ECO:0000255" key="1">
    <source>
        <dbReference type="HAMAP-Rule" id="MF_00595"/>
    </source>
</evidence>
<accession>Q5F5A9</accession>
<reference key="1">
    <citation type="submission" date="2003-03" db="EMBL/GenBank/DDBJ databases">
        <title>The complete genome sequence of Neisseria gonorrhoeae.</title>
        <authorList>
            <person name="Lewis L.A."/>
            <person name="Gillaspy A.F."/>
            <person name="McLaughlin R.E."/>
            <person name="Gipson M."/>
            <person name="Ducey T.F."/>
            <person name="Ownbey T."/>
            <person name="Hartman K."/>
            <person name="Nydick C."/>
            <person name="Carson M.B."/>
            <person name="Vaughn J."/>
            <person name="Thomson C."/>
            <person name="Song L."/>
            <person name="Lin S."/>
            <person name="Yuan X."/>
            <person name="Najar F."/>
            <person name="Zhan M."/>
            <person name="Ren Q."/>
            <person name="Zhu H."/>
            <person name="Qi S."/>
            <person name="Kenton S.M."/>
            <person name="Lai H."/>
            <person name="White J.D."/>
            <person name="Clifton S."/>
            <person name="Roe B.A."/>
            <person name="Dyer D.W."/>
        </authorList>
    </citation>
    <scope>NUCLEOTIDE SEQUENCE [LARGE SCALE GENOMIC DNA]</scope>
    <source>
        <strain>ATCC 700825 / FA 1090</strain>
    </source>
</reference>
<organism>
    <name type="scientific">Neisseria gonorrhoeae (strain ATCC 700825 / FA 1090)</name>
    <dbReference type="NCBI Taxonomy" id="242231"/>
    <lineage>
        <taxon>Bacteria</taxon>
        <taxon>Pseudomonadati</taxon>
        <taxon>Pseudomonadota</taxon>
        <taxon>Betaproteobacteria</taxon>
        <taxon>Neisseriales</taxon>
        <taxon>Neisseriaceae</taxon>
        <taxon>Neisseria</taxon>
    </lineage>
</organism>
<protein>
    <recommendedName>
        <fullName evidence="1">Phosphoenolpyruvate carboxylase</fullName>
        <shortName evidence="1">PEPC</shortName>
        <shortName evidence="1">PEPCase</shortName>
        <ecNumber evidence="1">4.1.1.31</ecNumber>
    </recommendedName>
</protein>
<proteinExistence type="inferred from homology"/>
<dbReference type="EC" id="4.1.1.31" evidence="1"/>
<dbReference type="EMBL" id="AE004969">
    <property type="protein sequence ID" value="AAW90628.1"/>
    <property type="molecule type" value="Genomic_DNA"/>
</dbReference>
<dbReference type="RefSeq" id="WP_010355840.1">
    <property type="nucleotide sequence ID" value="NC_002946.2"/>
</dbReference>
<dbReference type="RefSeq" id="YP_209040.2">
    <property type="nucleotide sequence ID" value="NC_002946.2"/>
</dbReference>
<dbReference type="SMR" id="Q5F5A9"/>
<dbReference type="STRING" id="242231.NGO_2020"/>
<dbReference type="KEGG" id="ngo:NGO_2020"/>
<dbReference type="PATRIC" id="fig|242231.10.peg.2435"/>
<dbReference type="HOGENOM" id="CLU_006557_2_0_4"/>
<dbReference type="Proteomes" id="UP000000535">
    <property type="component" value="Chromosome"/>
</dbReference>
<dbReference type="GO" id="GO:0005829">
    <property type="term" value="C:cytosol"/>
    <property type="evidence" value="ECO:0007669"/>
    <property type="project" value="TreeGrafter"/>
</dbReference>
<dbReference type="GO" id="GO:0000287">
    <property type="term" value="F:magnesium ion binding"/>
    <property type="evidence" value="ECO:0007669"/>
    <property type="project" value="UniProtKB-UniRule"/>
</dbReference>
<dbReference type="GO" id="GO:0008964">
    <property type="term" value="F:phosphoenolpyruvate carboxylase activity"/>
    <property type="evidence" value="ECO:0007669"/>
    <property type="project" value="UniProtKB-UniRule"/>
</dbReference>
<dbReference type="GO" id="GO:0015977">
    <property type="term" value="P:carbon fixation"/>
    <property type="evidence" value="ECO:0007669"/>
    <property type="project" value="UniProtKB-UniRule"/>
</dbReference>
<dbReference type="GO" id="GO:0006107">
    <property type="term" value="P:oxaloacetate metabolic process"/>
    <property type="evidence" value="ECO:0007669"/>
    <property type="project" value="UniProtKB-UniRule"/>
</dbReference>
<dbReference type="GO" id="GO:0006099">
    <property type="term" value="P:tricarboxylic acid cycle"/>
    <property type="evidence" value="ECO:0007669"/>
    <property type="project" value="InterPro"/>
</dbReference>
<dbReference type="Gene3D" id="1.20.1440.90">
    <property type="entry name" value="Phosphoenolpyruvate/pyruvate domain"/>
    <property type="match status" value="1"/>
</dbReference>
<dbReference type="HAMAP" id="MF_00595">
    <property type="entry name" value="PEPcase_type1"/>
    <property type="match status" value="1"/>
</dbReference>
<dbReference type="InterPro" id="IPR021135">
    <property type="entry name" value="PEP_COase"/>
</dbReference>
<dbReference type="InterPro" id="IPR022805">
    <property type="entry name" value="PEP_COase_bac/pln-type"/>
</dbReference>
<dbReference type="InterPro" id="IPR018129">
    <property type="entry name" value="PEP_COase_Lys_AS"/>
</dbReference>
<dbReference type="InterPro" id="IPR033129">
    <property type="entry name" value="PEPCASE_His_AS"/>
</dbReference>
<dbReference type="InterPro" id="IPR015813">
    <property type="entry name" value="Pyrv/PenolPyrv_kinase-like_dom"/>
</dbReference>
<dbReference type="NCBIfam" id="NF000584">
    <property type="entry name" value="PRK00009.1"/>
    <property type="match status" value="1"/>
</dbReference>
<dbReference type="PANTHER" id="PTHR30523">
    <property type="entry name" value="PHOSPHOENOLPYRUVATE CARBOXYLASE"/>
    <property type="match status" value="1"/>
</dbReference>
<dbReference type="PANTHER" id="PTHR30523:SF6">
    <property type="entry name" value="PHOSPHOENOLPYRUVATE CARBOXYLASE"/>
    <property type="match status" value="1"/>
</dbReference>
<dbReference type="Pfam" id="PF00311">
    <property type="entry name" value="PEPcase"/>
    <property type="match status" value="1"/>
</dbReference>
<dbReference type="PRINTS" id="PR00150">
    <property type="entry name" value="PEPCARBXLASE"/>
</dbReference>
<dbReference type="SUPFAM" id="SSF51621">
    <property type="entry name" value="Phosphoenolpyruvate/pyruvate domain"/>
    <property type="match status" value="1"/>
</dbReference>
<dbReference type="PROSITE" id="PS00781">
    <property type="entry name" value="PEPCASE_1"/>
    <property type="match status" value="1"/>
</dbReference>
<dbReference type="PROSITE" id="PS00393">
    <property type="entry name" value="PEPCASE_2"/>
    <property type="match status" value="1"/>
</dbReference>
<keyword id="KW-0120">Carbon dioxide fixation</keyword>
<keyword id="KW-0456">Lyase</keyword>
<keyword id="KW-0460">Magnesium</keyword>
<keyword id="KW-1185">Reference proteome</keyword>